<sequence>MRFTQIVAAALCLGATEAAVAPIDRARKVLGNQHAFDKRDASGDTAKAPKHLTSKNKKFYVDPNSIPGVPFDIGESYAGNLANTPAGNSSLFFWYFPSENPEAKNEITIWLNGGPGCSSMIGLLQENGPFLWQPGTDGPVKNPYAWSKLTNMVWVDQPAGTGFSPGPPTVKDEIDVANQFSDFWKNFMDTFDLHHSDVYLAGESYAGQYIPYIASGMLDRKDSEYFNVQGITIIDPSIGATEVIIDAPSVPALHRFNNIIDLNETFVNDITKKWESCGYKKFMDDALKFPPAGPMTVPGKSAGCDVWDEIIAAVKEVNPCFNIYHLRDNCPSPSNVMNGPKNFFNNKQIQEAIHAHPTDYRLCGESQIFGPHRNDRSVPSSYGPLASVIERTNNTIIAHGDLDFLLFTEGSLASIQNMTWGGLQGFQKEPSDKFYVPYKDGSEVGGAGFVGKTHRERGLTWVTVDLAGHEIPQYAPTAAYRMLEYMLGRVQSLTETH</sequence>
<accession>D4B0Q6</accession>
<gene>
    <name type="ORF">ARB_02032</name>
</gene>
<evidence type="ECO:0000250" key="1">
    <source>
        <dbReference type="UniProtKB" id="P00729"/>
    </source>
</evidence>
<evidence type="ECO:0000250" key="2">
    <source>
        <dbReference type="UniProtKB" id="P08819"/>
    </source>
</evidence>
<evidence type="ECO:0000255" key="3"/>
<evidence type="ECO:0000255" key="4">
    <source>
        <dbReference type="PROSITE-ProRule" id="PRU00498"/>
    </source>
</evidence>
<evidence type="ECO:0000255" key="5">
    <source>
        <dbReference type="PROSITE-ProRule" id="PRU10074"/>
    </source>
</evidence>
<evidence type="ECO:0000255" key="6">
    <source>
        <dbReference type="PROSITE-ProRule" id="PRU10075"/>
    </source>
</evidence>
<evidence type="ECO:0000305" key="7"/>
<organism>
    <name type="scientific">Arthroderma benhamiae (strain ATCC MYA-4681 / CBS 112371)</name>
    <name type="common">Trichophyton mentagrophytes</name>
    <dbReference type="NCBI Taxonomy" id="663331"/>
    <lineage>
        <taxon>Eukaryota</taxon>
        <taxon>Fungi</taxon>
        <taxon>Dikarya</taxon>
        <taxon>Ascomycota</taxon>
        <taxon>Pezizomycotina</taxon>
        <taxon>Eurotiomycetes</taxon>
        <taxon>Eurotiomycetidae</taxon>
        <taxon>Onygenales</taxon>
        <taxon>Arthrodermataceae</taxon>
        <taxon>Trichophyton</taxon>
    </lineage>
</organism>
<name>SCPD_ARTBC</name>
<proteinExistence type="inferred from homology"/>
<dbReference type="EC" id="3.4.16.5" evidence="1"/>
<dbReference type="EMBL" id="ABSU01000024">
    <property type="protein sequence ID" value="EFE31163.1"/>
    <property type="status" value="ALT_SEQ"/>
    <property type="molecule type" value="Genomic_DNA"/>
</dbReference>
<dbReference type="RefSeq" id="XP_003011803.1">
    <property type="nucleotide sequence ID" value="XM_003011757.1"/>
</dbReference>
<dbReference type="SMR" id="D4B0Q6"/>
<dbReference type="ESTHER" id="artbc-scpd">
    <property type="family name" value="Carboxypeptidase_S10"/>
</dbReference>
<dbReference type="MEROPS" id="S10.014"/>
<dbReference type="GeneID" id="9523576"/>
<dbReference type="KEGG" id="abe:ARB_02032"/>
<dbReference type="eggNOG" id="KOG1282">
    <property type="taxonomic scope" value="Eukaryota"/>
</dbReference>
<dbReference type="HOGENOM" id="CLU_008523_12_3_1"/>
<dbReference type="OrthoDB" id="443318at2759"/>
<dbReference type="Proteomes" id="UP000008866">
    <property type="component" value="Unassembled WGS sequence"/>
</dbReference>
<dbReference type="GO" id="GO:0005576">
    <property type="term" value="C:extracellular region"/>
    <property type="evidence" value="ECO:0007669"/>
    <property type="project" value="UniProtKB-SubCell"/>
</dbReference>
<dbReference type="GO" id="GO:0004185">
    <property type="term" value="F:serine-type carboxypeptidase activity"/>
    <property type="evidence" value="ECO:0007669"/>
    <property type="project" value="UniProtKB-EC"/>
</dbReference>
<dbReference type="GO" id="GO:0006508">
    <property type="term" value="P:proteolysis"/>
    <property type="evidence" value="ECO:0007669"/>
    <property type="project" value="UniProtKB-KW"/>
</dbReference>
<dbReference type="Gene3D" id="3.40.50.1820">
    <property type="entry name" value="alpha/beta hydrolase"/>
    <property type="match status" value="1"/>
</dbReference>
<dbReference type="InterPro" id="IPR029058">
    <property type="entry name" value="AB_hydrolase_fold"/>
</dbReference>
<dbReference type="InterPro" id="IPR001563">
    <property type="entry name" value="Peptidase_S10"/>
</dbReference>
<dbReference type="InterPro" id="IPR033124">
    <property type="entry name" value="Ser_caboxypep_his_AS"/>
</dbReference>
<dbReference type="InterPro" id="IPR018202">
    <property type="entry name" value="Ser_caboxypep_ser_AS"/>
</dbReference>
<dbReference type="PANTHER" id="PTHR11802:SF116">
    <property type="entry name" value="CARBOXYPEPTIDASE"/>
    <property type="match status" value="1"/>
</dbReference>
<dbReference type="PANTHER" id="PTHR11802">
    <property type="entry name" value="SERINE PROTEASE FAMILY S10 SERINE CARBOXYPEPTIDASE"/>
    <property type="match status" value="1"/>
</dbReference>
<dbReference type="Pfam" id="PF00450">
    <property type="entry name" value="Peptidase_S10"/>
    <property type="match status" value="1"/>
</dbReference>
<dbReference type="PRINTS" id="PR00724">
    <property type="entry name" value="CRBOXYPTASEC"/>
</dbReference>
<dbReference type="SUPFAM" id="SSF53474">
    <property type="entry name" value="alpha/beta-Hydrolases"/>
    <property type="match status" value="1"/>
</dbReference>
<dbReference type="PROSITE" id="PS00560">
    <property type="entry name" value="CARBOXYPEPT_SER_HIS"/>
    <property type="match status" value="1"/>
</dbReference>
<dbReference type="PROSITE" id="PS00131">
    <property type="entry name" value="CARBOXYPEPT_SER_SER"/>
    <property type="match status" value="1"/>
</dbReference>
<protein>
    <recommendedName>
        <fullName evidence="7">Carboxypeptidase Y homolog ARB_02032</fullName>
        <ecNumber evidence="1">3.4.16.5</ecNumber>
    </recommendedName>
    <alternativeName>
        <fullName evidence="7">Serine carboxypeptidase ARB_02032</fullName>
    </alternativeName>
</protein>
<reference key="1">
    <citation type="journal article" date="2011" name="Genome Biol.">
        <title>Comparative and functional genomics provide insights into the pathogenicity of dermatophytic fungi.</title>
        <authorList>
            <person name="Burmester A."/>
            <person name="Shelest E."/>
            <person name="Gloeckner G."/>
            <person name="Heddergott C."/>
            <person name="Schindler S."/>
            <person name="Staib P."/>
            <person name="Heidel A."/>
            <person name="Felder M."/>
            <person name="Petzold A."/>
            <person name="Szafranski K."/>
            <person name="Feuermann M."/>
            <person name="Pedruzzi I."/>
            <person name="Priebe S."/>
            <person name="Groth M."/>
            <person name="Winkler R."/>
            <person name="Li W."/>
            <person name="Kniemeyer O."/>
            <person name="Schroeckh V."/>
            <person name="Hertweck C."/>
            <person name="Hube B."/>
            <person name="White T.C."/>
            <person name="Platzer M."/>
            <person name="Guthke R."/>
            <person name="Heitman J."/>
            <person name="Woestemeyer J."/>
            <person name="Zipfel P.F."/>
            <person name="Monod M."/>
            <person name="Brakhage A.A."/>
        </authorList>
    </citation>
    <scope>NUCLEOTIDE SEQUENCE [LARGE SCALE GENOMIC DNA]</scope>
    <source>
        <strain>ATCC MYA-4681 / CBS 112371</strain>
    </source>
</reference>
<feature type="signal peptide" evidence="3">
    <location>
        <begin position="1"/>
        <end position="18"/>
    </location>
</feature>
<feature type="chain" id="PRO_0000435280" description="Carboxypeptidase Y homolog ARB_02032">
    <location>
        <begin position="19"/>
        <end position="497"/>
    </location>
</feature>
<feature type="active site" evidence="5">
    <location>
        <position position="204"/>
    </location>
</feature>
<feature type="active site" evidence="2">
    <location>
        <position position="403"/>
    </location>
</feature>
<feature type="active site" evidence="6">
    <location>
        <position position="469"/>
    </location>
</feature>
<feature type="glycosylation site" description="N-linked (GlcNAc...) asparagine" evidence="4">
    <location>
        <position position="88"/>
    </location>
</feature>
<feature type="glycosylation site" description="N-linked (GlcNAc...) asparagine" evidence="4">
    <location>
        <position position="263"/>
    </location>
</feature>
<feature type="glycosylation site" description="N-linked (GlcNAc...) asparagine" evidence="4">
    <location>
        <position position="393"/>
    </location>
</feature>
<feature type="glycosylation site" description="N-linked (GlcNAc...) asparagine" evidence="4">
    <location>
        <position position="417"/>
    </location>
</feature>
<comment type="function">
    <text evidence="1">Involved in degradation of small peptides.</text>
</comment>
<comment type="catalytic activity">
    <reaction evidence="1">
        <text>Release of a C-terminal amino acid with broad specificity.</text>
        <dbReference type="EC" id="3.4.16.5"/>
    </reaction>
</comment>
<comment type="subcellular location">
    <subcellularLocation>
        <location evidence="7">Secreted</location>
    </subcellularLocation>
</comment>
<comment type="similarity">
    <text evidence="7">Belongs to the peptidase S10 family.</text>
</comment>
<comment type="sequence caution" evidence="7">
    <conflict type="erroneous gene model prediction">
        <sequence resource="EMBL-CDS" id="EFE31163"/>
    </conflict>
</comment>
<keyword id="KW-0121">Carboxypeptidase</keyword>
<keyword id="KW-0325">Glycoprotein</keyword>
<keyword id="KW-0378">Hydrolase</keyword>
<keyword id="KW-0645">Protease</keyword>
<keyword id="KW-1185">Reference proteome</keyword>
<keyword id="KW-0964">Secreted</keyword>
<keyword id="KW-0732">Signal</keyword>